<protein>
    <recommendedName>
        <fullName evidence="1">Thymidylate kinase</fullName>
        <ecNumber evidence="1">2.7.4.9</ecNumber>
    </recommendedName>
    <alternativeName>
        <fullName evidence="1">dTMP kinase</fullName>
    </alternativeName>
</protein>
<dbReference type="EC" id="2.7.4.9" evidence="1"/>
<dbReference type="EMBL" id="AE016827">
    <property type="protein sequence ID" value="AAU37176.1"/>
    <property type="molecule type" value="Genomic_DNA"/>
</dbReference>
<dbReference type="SMR" id="Q65V34"/>
<dbReference type="STRING" id="221988.MS0569"/>
<dbReference type="KEGG" id="msu:MS0569"/>
<dbReference type="eggNOG" id="COG0125">
    <property type="taxonomic scope" value="Bacteria"/>
</dbReference>
<dbReference type="HOGENOM" id="CLU_049131_0_1_6"/>
<dbReference type="Proteomes" id="UP000000607">
    <property type="component" value="Chromosome"/>
</dbReference>
<dbReference type="GO" id="GO:0005829">
    <property type="term" value="C:cytosol"/>
    <property type="evidence" value="ECO:0007669"/>
    <property type="project" value="TreeGrafter"/>
</dbReference>
<dbReference type="GO" id="GO:0005524">
    <property type="term" value="F:ATP binding"/>
    <property type="evidence" value="ECO:0007669"/>
    <property type="project" value="UniProtKB-UniRule"/>
</dbReference>
<dbReference type="GO" id="GO:0004798">
    <property type="term" value="F:dTMP kinase activity"/>
    <property type="evidence" value="ECO:0007669"/>
    <property type="project" value="UniProtKB-UniRule"/>
</dbReference>
<dbReference type="GO" id="GO:0006233">
    <property type="term" value="P:dTDP biosynthetic process"/>
    <property type="evidence" value="ECO:0007669"/>
    <property type="project" value="InterPro"/>
</dbReference>
<dbReference type="GO" id="GO:0006235">
    <property type="term" value="P:dTTP biosynthetic process"/>
    <property type="evidence" value="ECO:0007669"/>
    <property type="project" value="UniProtKB-UniRule"/>
</dbReference>
<dbReference type="GO" id="GO:0006227">
    <property type="term" value="P:dUDP biosynthetic process"/>
    <property type="evidence" value="ECO:0007669"/>
    <property type="project" value="TreeGrafter"/>
</dbReference>
<dbReference type="CDD" id="cd01672">
    <property type="entry name" value="TMPK"/>
    <property type="match status" value="1"/>
</dbReference>
<dbReference type="FunFam" id="3.40.50.300:FF:000321">
    <property type="entry name" value="Thymidylate kinase"/>
    <property type="match status" value="1"/>
</dbReference>
<dbReference type="Gene3D" id="3.40.50.300">
    <property type="entry name" value="P-loop containing nucleotide triphosphate hydrolases"/>
    <property type="match status" value="1"/>
</dbReference>
<dbReference type="HAMAP" id="MF_00165">
    <property type="entry name" value="Thymidylate_kinase"/>
    <property type="match status" value="1"/>
</dbReference>
<dbReference type="InterPro" id="IPR027417">
    <property type="entry name" value="P-loop_NTPase"/>
</dbReference>
<dbReference type="InterPro" id="IPR039430">
    <property type="entry name" value="Thymidylate_kin-like_dom"/>
</dbReference>
<dbReference type="InterPro" id="IPR018095">
    <property type="entry name" value="Thymidylate_kin_CS"/>
</dbReference>
<dbReference type="InterPro" id="IPR018094">
    <property type="entry name" value="Thymidylate_kinase"/>
</dbReference>
<dbReference type="NCBIfam" id="TIGR00041">
    <property type="entry name" value="DTMP_kinase"/>
    <property type="match status" value="1"/>
</dbReference>
<dbReference type="PANTHER" id="PTHR10344">
    <property type="entry name" value="THYMIDYLATE KINASE"/>
    <property type="match status" value="1"/>
</dbReference>
<dbReference type="PANTHER" id="PTHR10344:SF4">
    <property type="entry name" value="UMP-CMP KINASE 2, MITOCHONDRIAL"/>
    <property type="match status" value="1"/>
</dbReference>
<dbReference type="Pfam" id="PF02223">
    <property type="entry name" value="Thymidylate_kin"/>
    <property type="match status" value="1"/>
</dbReference>
<dbReference type="SUPFAM" id="SSF52540">
    <property type="entry name" value="P-loop containing nucleoside triphosphate hydrolases"/>
    <property type="match status" value="1"/>
</dbReference>
<dbReference type="PROSITE" id="PS01331">
    <property type="entry name" value="THYMIDYLATE_KINASE"/>
    <property type="match status" value="1"/>
</dbReference>
<reference key="1">
    <citation type="journal article" date="2004" name="Nat. Biotechnol.">
        <title>The genome sequence of the capnophilic rumen bacterium Mannheimia succiniciproducens.</title>
        <authorList>
            <person name="Hong S.H."/>
            <person name="Kim J.S."/>
            <person name="Lee S.Y."/>
            <person name="In Y.H."/>
            <person name="Choi S.S."/>
            <person name="Rih J.-K."/>
            <person name="Kim C.H."/>
            <person name="Jeong H."/>
            <person name="Hur C.G."/>
            <person name="Kim J.J."/>
        </authorList>
    </citation>
    <scope>NUCLEOTIDE SEQUENCE [LARGE SCALE GENOMIC DNA]</scope>
    <source>
        <strain>KCTC 0769BP / MBEL55E</strain>
    </source>
</reference>
<sequence length="214" mass="23860">MNKNMNGKFIVLEGLEGAGKTTARQAVVEQLNALGITDLLFTREPGGTPLAEKLRNLIKYETEEPVTDKAELLMLYAARIQLVENVIKPALAQGKWVIGDRHDLSSQAYQGGGRQIDSHLLETLKKTVLGDFEPDFTLYLDLSPAIGLARARGRGELDRIEQQNLAFFDRTRTRYLELVKDNPKAVIINAEQSIERVTADIKTAVKNWVNSISL</sequence>
<proteinExistence type="inferred from homology"/>
<accession>Q65V34</accession>
<evidence type="ECO:0000255" key="1">
    <source>
        <dbReference type="HAMAP-Rule" id="MF_00165"/>
    </source>
</evidence>
<organism>
    <name type="scientific">Mannheimia succiniciproducens (strain KCTC 0769BP / MBEL55E)</name>
    <dbReference type="NCBI Taxonomy" id="221988"/>
    <lineage>
        <taxon>Bacteria</taxon>
        <taxon>Pseudomonadati</taxon>
        <taxon>Pseudomonadota</taxon>
        <taxon>Gammaproteobacteria</taxon>
        <taxon>Pasteurellales</taxon>
        <taxon>Pasteurellaceae</taxon>
        <taxon>Basfia</taxon>
    </lineage>
</organism>
<feature type="chain" id="PRO_0000155298" description="Thymidylate kinase">
    <location>
        <begin position="1"/>
        <end position="214"/>
    </location>
</feature>
<feature type="binding site" evidence="1">
    <location>
        <begin position="14"/>
        <end position="21"/>
    </location>
    <ligand>
        <name>ATP</name>
        <dbReference type="ChEBI" id="CHEBI:30616"/>
    </ligand>
</feature>
<keyword id="KW-0067">ATP-binding</keyword>
<keyword id="KW-0418">Kinase</keyword>
<keyword id="KW-0545">Nucleotide biosynthesis</keyword>
<keyword id="KW-0547">Nucleotide-binding</keyword>
<keyword id="KW-0808">Transferase</keyword>
<gene>
    <name evidence="1" type="primary">tmk</name>
    <name type="ordered locus">MS0569</name>
</gene>
<name>KTHY_MANSM</name>
<comment type="function">
    <text evidence="1">Phosphorylation of dTMP to form dTDP in both de novo and salvage pathways of dTTP synthesis.</text>
</comment>
<comment type="catalytic activity">
    <reaction evidence="1">
        <text>dTMP + ATP = dTDP + ADP</text>
        <dbReference type="Rhea" id="RHEA:13517"/>
        <dbReference type="ChEBI" id="CHEBI:30616"/>
        <dbReference type="ChEBI" id="CHEBI:58369"/>
        <dbReference type="ChEBI" id="CHEBI:63528"/>
        <dbReference type="ChEBI" id="CHEBI:456216"/>
        <dbReference type="EC" id="2.7.4.9"/>
    </reaction>
</comment>
<comment type="similarity">
    <text evidence="1">Belongs to the thymidylate kinase family.</text>
</comment>